<sequence>MSDIALTVSILALVAVVGLFIGNVKFRGIGLGIGGVLFGGIIVGHFVSQAGMTLSSDMLHVIQEFGLILFVYTIGIQVGPGFFASLRVSGLRLNLFAVLIVIIGGLVTAILHKLFDIPLPVVMGIFSGAVTNTPALGAGQQILRDLGTPMEMVDQMGMSYAMAYPFGICGILFTMWMLRVIFRVNVETEAQQHESSRTNGGALIKTINIRVENPNLHDLAIKDVPILNGDKIICSRLKREETLKVPSPDTIIQLGDLLHLVGQPADLHNAQLVIGQEVDTSLSTKGTDLRVERVVVTNENVLGKRIRDLHFKERYDVVISRLNRAGVELVASGDISLQFGDILNLVGRPSAIDAVANVLGNAQQKLQQVQMLPVFIGIGLGVLLGSIPVFVPGFPAALKLGLAGGPLIMALILGRIGSIGKLYWFMPPSANLALRELGIVLFLSVVGLKSGGDFVNTLVNGEGLSWIGYGALITAVPLITVGILARMLAKMNYLTMCGMLAGSMTDPPALAFANNLHPTSGAAALSYATVYPLVMFLRIITPQLLAVLFWSIG</sequence>
<proteinExistence type="inferred from homology"/>
<keyword id="KW-1003">Cell membrane</keyword>
<keyword id="KW-0472">Membrane</keyword>
<keyword id="KW-1185">Reference proteome</keyword>
<keyword id="KW-0677">Repeat</keyword>
<keyword id="KW-0812">Transmembrane</keyword>
<keyword id="KW-1133">Transmembrane helix</keyword>
<keyword id="KW-0813">Transport</keyword>
<name>YIDE_SHIB3</name>
<dbReference type="EMBL" id="CP001063">
    <property type="protein sequence ID" value="ACD06919.1"/>
    <property type="molecule type" value="Genomic_DNA"/>
</dbReference>
<dbReference type="RefSeq" id="WP_001279767.1">
    <property type="nucleotide sequence ID" value="NC_010658.1"/>
</dbReference>
<dbReference type="SMR" id="B2TUT7"/>
<dbReference type="STRING" id="344609.SbBS512_E4236"/>
<dbReference type="KEGG" id="sbc:SbBS512_E4236"/>
<dbReference type="HOGENOM" id="CLU_035023_3_1_6"/>
<dbReference type="Proteomes" id="UP000001030">
    <property type="component" value="Chromosome"/>
</dbReference>
<dbReference type="GO" id="GO:0005886">
    <property type="term" value="C:plasma membrane"/>
    <property type="evidence" value="ECO:0007669"/>
    <property type="project" value="UniProtKB-SubCell"/>
</dbReference>
<dbReference type="GO" id="GO:0008324">
    <property type="term" value="F:monoatomic cation transmembrane transporter activity"/>
    <property type="evidence" value="ECO:0007669"/>
    <property type="project" value="InterPro"/>
</dbReference>
<dbReference type="GO" id="GO:0006813">
    <property type="term" value="P:potassium ion transport"/>
    <property type="evidence" value="ECO:0007669"/>
    <property type="project" value="InterPro"/>
</dbReference>
<dbReference type="FunFam" id="3.30.70.1450:FF:000004">
    <property type="entry name" value="Putative transport protein YidE"/>
    <property type="match status" value="1"/>
</dbReference>
<dbReference type="Gene3D" id="3.30.70.1450">
    <property type="entry name" value="Regulator of K+ conductance, C-terminal domain"/>
    <property type="match status" value="2"/>
</dbReference>
<dbReference type="HAMAP" id="MF_01016">
    <property type="entry name" value="YidE"/>
    <property type="match status" value="1"/>
</dbReference>
<dbReference type="InterPro" id="IPR050144">
    <property type="entry name" value="AAE_transporter"/>
</dbReference>
<dbReference type="InterPro" id="IPR006037">
    <property type="entry name" value="RCK_C"/>
</dbReference>
<dbReference type="InterPro" id="IPR036721">
    <property type="entry name" value="RCK_C_sf"/>
</dbReference>
<dbReference type="InterPro" id="IPR023018">
    <property type="entry name" value="Transpt_YidE_put"/>
</dbReference>
<dbReference type="InterPro" id="IPR006512">
    <property type="entry name" value="YidE_YbjL"/>
</dbReference>
<dbReference type="NCBIfam" id="NF003007">
    <property type="entry name" value="PRK03818.1"/>
    <property type="match status" value="1"/>
</dbReference>
<dbReference type="NCBIfam" id="TIGR01625">
    <property type="entry name" value="YidE_YbjL_dupl"/>
    <property type="match status" value="2"/>
</dbReference>
<dbReference type="PANTHER" id="PTHR30445">
    <property type="entry name" value="K(+)_H(+) ANTIPORTER SUBUNIT KHTT"/>
    <property type="match status" value="1"/>
</dbReference>
<dbReference type="PANTHER" id="PTHR30445:SF3">
    <property type="entry name" value="TRANSPORT PROTEIN YIDE-RELATED"/>
    <property type="match status" value="1"/>
</dbReference>
<dbReference type="Pfam" id="PF06826">
    <property type="entry name" value="Asp-Al_Ex"/>
    <property type="match status" value="2"/>
</dbReference>
<dbReference type="Pfam" id="PF02080">
    <property type="entry name" value="TrkA_C"/>
    <property type="match status" value="2"/>
</dbReference>
<dbReference type="SUPFAM" id="SSF116726">
    <property type="entry name" value="TrkA C-terminal domain-like"/>
    <property type="match status" value="2"/>
</dbReference>
<dbReference type="PROSITE" id="PS51202">
    <property type="entry name" value="RCK_C"/>
    <property type="match status" value="2"/>
</dbReference>
<reference key="1">
    <citation type="submission" date="2008-05" db="EMBL/GenBank/DDBJ databases">
        <title>Complete sequence of Shigella boydii serotype 18 strain BS512.</title>
        <authorList>
            <person name="Rasko D.A."/>
            <person name="Rosovitz M."/>
            <person name="Maurelli A.T."/>
            <person name="Myers G."/>
            <person name="Seshadri R."/>
            <person name="Cer R."/>
            <person name="Jiang L."/>
            <person name="Ravel J."/>
            <person name="Sebastian Y."/>
        </authorList>
    </citation>
    <scope>NUCLEOTIDE SEQUENCE [LARGE SCALE GENOMIC DNA]</scope>
    <source>
        <strain>CDC 3083-94 / BS512</strain>
    </source>
</reference>
<organism>
    <name type="scientific">Shigella boydii serotype 18 (strain CDC 3083-94 / BS512)</name>
    <dbReference type="NCBI Taxonomy" id="344609"/>
    <lineage>
        <taxon>Bacteria</taxon>
        <taxon>Pseudomonadati</taxon>
        <taxon>Pseudomonadota</taxon>
        <taxon>Gammaproteobacteria</taxon>
        <taxon>Enterobacterales</taxon>
        <taxon>Enterobacteriaceae</taxon>
        <taxon>Shigella</taxon>
    </lineage>
</organism>
<accession>B2TUT7</accession>
<feature type="chain" id="PRO_1000135220" description="Putative transport protein YidE">
    <location>
        <begin position="1"/>
        <end position="553"/>
    </location>
</feature>
<feature type="transmembrane region" description="Helical" evidence="1">
    <location>
        <begin position="4"/>
        <end position="24"/>
    </location>
</feature>
<feature type="transmembrane region" description="Helical" evidence="1">
    <location>
        <begin position="28"/>
        <end position="48"/>
    </location>
</feature>
<feature type="transmembrane region" description="Helical" evidence="1">
    <location>
        <begin position="65"/>
        <end position="85"/>
    </location>
</feature>
<feature type="transmembrane region" description="Helical" evidence="1">
    <location>
        <begin position="95"/>
        <end position="115"/>
    </location>
</feature>
<feature type="transmembrane region" description="Helical" evidence="1">
    <location>
        <begin position="158"/>
        <end position="178"/>
    </location>
</feature>
<feature type="transmembrane region" description="Helical" evidence="1">
    <location>
        <begin position="371"/>
        <end position="391"/>
    </location>
</feature>
<feature type="transmembrane region" description="Helical" evidence="1">
    <location>
        <begin position="393"/>
        <end position="413"/>
    </location>
</feature>
<feature type="transmembrane region" description="Helical" evidence="1">
    <location>
        <begin position="439"/>
        <end position="459"/>
    </location>
</feature>
<feature type="transmembrane region" description="Helical" evidence="1">
    <location>
        <begin position="464"/>
        <end position="484"/>
    </location>
</feature>
<feature type="transmembrane region" description="Helical" evidence="1">
    <location>
        <begin position="493"/>
        <end position="513"/>
    </location>
</feature>
<feature type="transmembrane region" description="Helical" evidence="1">
    <location>
        <begin position="533"/>
        <end position="553"/>
    </location>
</feature>
<feature type="domain" description="RCK C-terminal 1" evidence="1">
    <location>
        <begin position="191"/>
        <end position="276"/>
    </location>
</feature>
<feature type="domain" description="RCK C-terminal 2" evidence="1">
    <location>
        <begin position="279"/>
        <end position="361"/>
    </location>
</feature>
<protein>
    <recommendedName>
        <fullName evidence="1">Putative transport protein YidE</fullName>
    </recommendedName>
</protein>
<comment type="subcellular location">
    <subcellularLocation>
        <location evidence="1">Cell membrane</location>
        <topology evidence="1">Multi-pass membrane protein</topology>
    </subcellularLocation>
</comment>
<comment type="similarity">
    <text evidence="1">Belongs to the AAE transporter (TC 2.A.81) family. YidE subfamily.</text>
</comment>
<gene>
    <name evidence="1" type="primary">yidE</name>
    <name type="ordered locus">SbBS512_E4236</name>
</gene>
<evidence type="ECO:0000255" key="1">
    <source>
        <dbReference type="HAMAP-Rule" id="MF_01016"/>
    </source>
</evidence>